<comment type="function">
    <text evidence="1 5">Hydrolyzes the second messenger cAMP, which is a key regulator of many important physiological processes (By similarity). Vital for female fertility. Required for learning/memory.</text>
</comment>
<comment type="catalytic activity">
    <reaction evidence="5">
        <text>3',5'-cyclic AMP + H2O = AMP + H(+)</text>
        <dbReference type="Rhea" id="RHEA:25277"/>
        <dbReference type="ChEBI" id="CHEBI:15377"/>
        <dbReference type="ChEBI" id="CHEBI:15378"/>
        <dbReference type="ChEBI" id="CHEBI:58165"/>
        <dbReference type="ChEBI" id="CHEBI:456215"/>
        <dbReference type="EC" id="3.1.4.53"/>
    </reaction>
</comment>
<comment type="cofactor">
    <cofactor evidence="1">
        <name>a divalent metal cation</name>
        <dbReference type="ChEBI" id="CHEBI:60240"/>
    </cofactor>
    <text evidence="1">Binds 2 divalent metal cations per subunit. Site 1 may preferentially bind zinc ions, while site 2 has a preference for magnesium and/or manganese ions.</text>
</comment>
<comment type="pathway">
    <text>Purine metabolism; 3',5'-cyclic AMP degradation; AMP from 3',5'-cyclic AMP: step 1/1.</text>
</comment>
<comment type="subunit">
    <text evidence="5">Monomer.</text>
</comment>
<comment type="alternative products">
    <event type="alternative splicing"/>
    <event type="alternative initiation"/>
    <isoform>
        <id>Q9W4T4-1</id>
        <name evidence="5">I</name>
        <name evidence="6">B</name>
        <name>S</name>
        <sequence type="displayed"/>
    </isoform>
    <isoform>
        <id>P12252-1</id>
        <name evidence="5">II</name>
        <name evidence="6">I</name>
        <name evidence="6">J</name>
        <sequence type="external"/>
    </isoform>
    <isoform>
        <id>P12252-7</id>
        <name>III</name>
        <name>E</name>
        <name>P</name>
        <sequence type="external"/>
    </isoform>
    <isoform>
        <id>P12252-3</id>
        <name evidence="5">IV</name>
        <name evidence="6">A</name>
        <sequence type="external"/>
    </isoform>
    <isoform>
        <id>P12252-4</id>
        <name evidence="5">V</name>
        <name evidence="6">C</name>
        <sequence type="external"/>
    </isoform>
    <isoform>
        <id>P12252-5</id>
        <name evidence="5">VI</name>
        <name evidence="6">D</name>
        <sequence type="external"/>
    </isoform>
    <isoform>
        <id>P12252-6</id>
        <name evidence="5">VII</name>
        <name evidence="6">L</name>
        <sequence type="external"/>
    </isoform>
    <isoform>
        <id>Q8IRU4-1</id>
        <name evidence="6">F</name>
        <sequence type="external"/>
    </isoform>
    <isoform>
        <id>Q9W4S9-2</id>
        <name evidence="6">G</name>
        <sequence type="external"/>
    </isoform>
    <isoform>
        <id>Q9W4S9-1</id>
        <name evidence="6">N</name>
        <sequence type="external"/>
    </isoform>
    <isoform>
        <id>P12252-8</id>
        <id>Q9W4T0-1</id>
        <name>R</name>
        <name>Q</name>
        <sequence type="external"/>
    </isoform>
    <isoform>
        <id>P12252-9</id>
        <name>U</name>
        <name>T</name>
        <sequence type="external"/>
    </isoform>
</comment>
<comment type="similarity">
    <text evidence="7">Belongs to the cyclic nucleotide phosphodiesterase family. PDE4 subfamily.</text>
</comment>
<comment type="sequence caution" evidence="7">
    <conflict type="erroneous gene model prediction">
        <sequence resource="EMBL-CDS" id="CAA19668"/>
    </conflict>
</comment>
<sequence>MMRLARFTQGFSFNKNVAKHRGSGSSNGTGNGSGTGNGQGLGGSCSANGLAATGGVGGGGGSGSGGGGCGSGSGSGSGKRKSKARTKCFGGTVFRCCLPCRGGGSAAPATSPPQTPAQTPDELKVIPEDCNLEKSAEQKRDLLERNNKEDDLLNRTVSGSELDLYGGAGGGTKKHSLADTIDTSVTTPISLKTLINDVDEELDQQLSAADIAAASLASGLVARRAEPETLSDASVSPTAVVQQQQQQQQQLQQPLLQSQPHFVPSSGNILSQVTLYSGSNPSTNPCQSAVQNQGQNSNPNPNQNPNTNPNQNQQRCSCQPQTSPLPHIKEEEESDQANFKHQTSLKEHQPLPPPITIATGYCGSCESVHHSSATSSSAGTVPPGGQQTQEYIAGTSSTPSPRIKLKFRKPHKSCWSRIVLAPIGSAGGSSSATTVIGSNSNETLASSSTTGGTATTTQNSSSVSVAAHHRLTSSSASALATSHPSNSQLLPTSKMQAEQGSIGDLQKYHSRYLKNRRHTLANVRFDVENGQGARSPLEGGSPSAGLVLQNLPQRRESFLYRSDSDFEMSPKSMSRNSSIASERFKEQEASILVDRSHGEDLIVTPFAQILASLRSVRNNLLSLTNVPASNKSRRPNQSSSASRSGNPPGAPLSQGEEAYTRLATDTIEELDWCLDQLETIQTHRSVSDMASLKFKRMLNKELSHFSESSRSGNQISEYICSTFLDKQQEFDLPSLRVEDNPELVAANAAAGQQSAGQYARSRSPRGPPMSQISGVKRPLSHTNSFTGERLPTFGVETPRENELGTLLGELDTWGIQIFSIGEFSVNRPLTCVAYTIFQSRELLTSLMIPPKTFLNFMSTLEDHYVKDNPFHNSLHAADVTQSTNVLLNTPALEGVFTPLEVGGALFAACIHDVDHPGLTNQFLVNSSSELALMYNDESVLENHHLAVAFKLLQNQGCDIFCNMQKKQRQTLRKMVIDIVLSTDMSKHMSLLADLKTMVETKKVAGSGVLLLDNYTDRIQVLENLVHCADLSNPTKPLPLYKRWVALLMEEFFLQGDKERESGMDISPMCDRHNATIEKSQVGFIDYIVHPLWETWADLVHPDAQDILDTLEENRDYYQSMIPPSPPPSGVDENPQEDRIRFQVTLEESDQENLAELEEGDESGGESTTTGTTGTTAASALSGAGGGGGGGGGMAPRTGGCQNQPQHGGM</sequence>
<gene>
    <name evidence="8" type="primary">dnc</name>
    <name type="ORF">CG32498</name>
</gene>
<feature type="chain" id="PRO_0000198817" description="3',5'-cyclic-AMP phosphodiesterase, isoform I">
    <location>
        <begin position="1"/>
        <end position="1209"/>
    </location>
</feature>
<feature type="domain" description="PDEase" evidence="2">
    <location>
        <begin position="795"/>
        <end position="1124"/>
    </location>
</feature>
<feature type="region of interest" description="Disordered" evidence="3">
    <location>
        <begin position="16"/>
        <end position="35"/>
    </location>
</feature>
<feature type="region of interest" description="Disordered" evidence="3">
    <location>
        <begin position="59"/>
        <end position="82"/>
    </location>
</feature>
<feature type="region of interest" description="Disordered" evidence="3">
    <location>
        <begin position="275"/>
        <end position="353"/>
    </location>
</feature>
<feature type="region of interest" description="Disordered" evidence="3">
    <location>
        <begin position="372"/>
        <end position="403"/>
    </location>
</feature>
<feature type="region of interest" description="Disordered" evidence="3">
    <location>
        <begin position="442"/>
        <end position="498"/>
    </location>
</feature>
<feature type="region of interest" description="Disordered" evidence="3">
    <location>
        <begin position="626"/>
        <end position="655"/>
    </location>
</feature>
<feature type="region of interest" description="Disordered" evidence="3">
    <location>
        <begin position="754"/>
        <end position="792"/>
    </location>
</feature>
<feature type="region of interest" description="Disordered" evidence="3">
    <location>
        <begin position="1146"/>
        <end position="1209"/>
    </location>
</feature>
<feature type="compositionally biased region" description="Gly residues" evidence="3">
    <location>
        <begin position="25"/>
        <end position="35"/>
    </location>
</feature>
<feature type="compositionally biased region" description="Gly residues" evidence="3">
    <location>
        <begin position="59"/>
        <end position="77"/>
    </location>
</feature>
<feature type="compositionally biased region" description="Polar residues" evidence="3">
    <location>
        <begin position="275"/>
        <end position="290"/>
    </location>
</feature>
<feature type="compositionally biased region" description="Low complexity" evidence="3">
    <location>
        <begin position="291"/>
        <end position="314"/>
    </location>
</feature>
<feature type="compositionally biased region" description="Polar residues" evidence="3">
    <location>
        <begin position="315"/>
        <end position="324"/>
    </location>
</feature>
<feature type="compositionally biased region" description="Low complexity" evidence="3">
    <location>
        <begin position="372"/>
        <end position="383"/>
    </location>
</feature>
<feature type="compositionally biased region" description="Polar residues" evidence="3">
    <location>
        <begin position="385"/>
        <end position="400"/>
    </location>
</feature>
<feature type="compositionally biased region" description="Low complexity" evidence="3">
    <location>
        <begin position="445"/>
        <end position="462"/>
    </location>
</feature>
<feature type="compositionally biased region" description="Low complexity" evidence="3">
    <location>
        <begin position="472"/>
        <end position="483"/>
    </location>
</feature>
<feature type="compositionally biased region" description="Polar residues" evidence="3">
    <location>
        <begin position="484"/>
        <end position="498"/>
    </location>
</feature>
<feature type="compositionally biased region" description="Polar residues" evidence="3">
    <location>
        <begin position="627"/>
        <end position="645"/>
    </location>
</feature>
<feature type="compositionally biased region" description="Acidic residues" evidence="3">
    <location>
        <begin position="1146"/>
        <end position="1163"/>
    </location>
</feature>
<feature type="compositionally biased region" description="Low complexity" evidence="3">
    <location>
        <begin position="1164"/>
        <end position="1181"/>
    </location>
</feature>
<feature type="compositionally biased region" description="Gly residues" evidence="3">
    <location>
        <begin position="1182"/>
        <end position="1193"/>
    </location>
</feature>
<feature type="compositionally biased region" description="Polar residues" evidence="3">
    <location>
        <begin position="1199"/>
        <end position="1209"/>
    </location>
</feature>
<feature type="active site" description="Proton donor" evidence="1">
    <location>
        <position position="871"/>
    </location>
</feature>
<feature type="binding site" evidence="1">
    <location>
        <begin position="871"/>
        <end position="875"/>
    </location>
    <ligand>
        <name>3',5'-cyclic AMP</name>
        <dbReference type="ChEBI" id="CHEBI:58165"/>
    </ligand>
</feature>
<feature type="binding site" evidence="1">
    <location>
        <position position="875"/>
    </location>
    <ligand>
        <name>a divalent metal cation</name>
        <dbReference type="ChEBI" id="CHEBI:60240"/>
        <label>1</label>
    </ligand>
</feature>
<feature type="binding site" evidence="1">
    <location>
        <position position="911"/>
    </location>
    <ligand>
        <name>a divalent metal cation</name>
        <dbReference type="ChEBI" id="CHEBI:60240"/>
        <label>1</label>
    </ligand>
</feature>
<feature type="binding site" evidence="1">
    <location>
        <position position="912"/>
    </location>
    <ligand>
        <name>3',5'-cyclic AMP</name>
        <dbReference type="ChEBI" id="CHEBI:58165"/>
    </ligand>
</feature>
<feature type="binding site" evidence="1">
    <location>
        <position position="912"/>
    </location>
    <ligand>
        <name>a divalent metal cation</name>
        <dbReference type="ChEBI" id="CHEBI:60240"/>
        <label>1</label>
    </ligand>
</feature>
<feature type="binding site" evidence="1">
    <location>
        <position position="912"/>
    </location>
    <ligand>
        <name>a divalent metal cation</name>
        <dbReference type="ChEBI" id="CHEBI:60240"/>
        <label>2</label>
    </ligand>
</feature>
<feature type="binding site" evidence="1">
    <location>
        <position position="1029"/>
    </location>
    <ligand>
        <name>3',5'-cyclic AMP</name>
        <dbReference type="ChEBI" id="CHEBI:58165"/>
    </ligand>
</feature>
<feature type="binding site" evidence="1">
    <location>
        <position position="1029"/>
    </location>
    <ligand>
        <name>a divalent metal cation</name>
        <dbReference type="ChEBI" id="CHEBI:60240"/>
        <label>1</label>
    </ligand>
</feature>
<feature type="binding site" evidence="1">
    <location>
        <position position="1080"/>
    </location>
    <ligand>
        <name>3',5'-cyclic AMP</name>
        <dbReference type="ChEBI" id="CHEBI:58165"/>
    </ligand>
</feature>
<feature type="site" description="Binds AMP, but not cAMP" evidence="1">
    <location>
        <position position="1032"/>
    </location>
</feature>
<feature type="sequence conflict" description="In Ref. 4; no nucleotide entry." evidence="7" ref="4">
    <original>D</original>
    <variation>S</variation>
    <location>
        <position position="1097"/>
    </location>
</feature>
<feature type="sequence conflict" description="In Ref. 4; no nucleotide entry." evidence="7" ref="4">
    <original>S</original>
    <variation>T</variation>
    <location>
        <position position="1166"/>
    </location>
</feature>
<feature type="sequence conflict" description="In Ref. 4; no nucleotide entry." evidence="7" ref="4">
    <original>SG</original>
    <variation>R</variation>
    <location>
        <begin position="1181"/>
        <end position="1182"/>
    </location>
</feature>
<reference evidence="8" key="1">
    <citation type="journal article" date="2000" name="Science">
        <title>The genome sequence of Drosophila melanogaster.</title>
        <authorList>
            <person name="Adams M.D."/>
            <person name="Celniker S.E."/>
            <person name="Holt R.A."/>
            <person name="Evans C.A."/>
            <person name="Gocayne J.D."/>
            <person name="Amanatides P.G."/>
            <person name="Scherer S.E."/>
            <person name="Li P.W."/>
            <person name="Hoskins R.A."/>
            <person name="Galle R.F."/>
            <person name="George R.A."/>
            <person name="Lewis S.E."/>
            <person name="Richards S."/>
            <person name="Ashburner M."/>
            <person name="Henderson S.N."/>
            <person name="Sutton G.G."/>
            <person name="Wortman J.R."/>
            <person name="Yandell M.D."/>
            <person name="Zhang Q."/>
            <person name="Chen L.X."/>
            <person name="Brandon R.C."/>
            <person name="Rogers Y.-H.C."/>
            <person name="Blazej R.G."/>
            <person name="Champe M."/>
            <person name="Pfeiffer B.D."/>
            <person name="Wan K.H."/>
            <person name="Doyle C."/>
            <person name="Baxter E.G."/>
            <person name="Helt G."/>
            <person name="Nelson C.R."/>
            <person name="Miklos G.L.G."/>
            <person name="Abril J.F."/>
            <person name="Agbayani A."/>
            <person name="An H.-J."/>
            <person name="Andrews-Pfannkoch C."/>
            <person name="Baldwin D."/>
            <person name="Ballew R.M."/>
            <person name="Basu A."/>
            <person name="Baxendale J."/>
            <person name="Bayraktaroglu L."/>
            <person name="Beasley E.M."/>
            <person name="Beeson K.Y."/>
            <person name="Benos P.V."/>
            <person name="Berman B.P."/>
            <person name="Bhandari D."/>
            <person name="Bolshakov S."/>
            <person name="Borkova D."/>
            <person name="Botchan M.R."/>
            <person name="Bouck J."/>
            <person name="Brokstein P."/>
            <person name="Brottier P."/>
            <person name="Burtis K.C."/>
            <person name="Busam D.A."/>
            <person name="Butler H."/>
            <person name="Cadieu E."/>
            <person name="Center A."/>
            <person name="Chandra I."/>
            <person name="Cherry J.M."/>
            <person name="Cawley S."/>
            <person name="Dahlke C."/>
            <person name="Davenport L.B."/>
            <person name="Davies P."/>
            <person name="de Pablos B."/>
            <person name="Delcher A."/>
            <person name="Deng Z."/>
            <person name="Mays A.D."/>
            <person name="Dew I."/>
            <person name="Dietz S.M."/>
            <person name="Dodson K."/>
            <person name="Doup L.E."/>
            <person name="Downes M."/>
            <person name="Dugan-Rocha S."/>
            <person name="Dunkov B.C."/>
            <person name="Dunn P."/>
            <person name="Durbin K.J."/>
            <person name="Evangelista C.C."/>
            <person name="Ferraz C."/>
            <person name="Ferriera S."/>
            <person name="Fleischmann W."/>
            <person name="Fosler C."/>
            <person name="Gabrielian A.E."/>
            <person name="Garg N.S."/>
            <person name="Gelbart W.M."/>
            <person name="Glasser K."/>
            <person name="Glodek A."/>
            <person name="Gong F."/>
            <person name="Gorrell J.H."/>
            <person name="Gu Z."/>
            <person name="Guan P."/>
            <person name="Harris M."/>
            <person name="Harris N.L."/>
            <person name="Harvey D.A."/>
            <person name="Heiman T.J."/>
            <person name="Hernandez J.R."/>
            <person name="Houck J."/>
            <person name="Hostin D."/>
            <person name="Houston K.A."/>
            <person name="Howland T.J."/>
            <person name="Wei M.-H."/>
            <person name="Ibegwam C."/>
            <person name="Jalali M."/>
            <person name="Kalush F."/>
            <person name="Karpen G.H."/>
            <person name="Ke Z."/>
            <person name="Kennison J.A."/>
            <person name="Ketchum K.A."/>
            <person name="Kimmel B.E."/>
            <person name="Kodira C.D."/>
            <person name="Kraft C.L."/>
            <person name="Kravitz S."/>
            <person name="Kulp D."/>
            <person name="Lai Z."/>
            <person name="Lasko P."/>
            <person name="Lei Y."/>
            <person name="Levitsky A.A."/>
            <person name="Li J.H."/>
            <person name="Li Z."/>
            <person name="Liang Y."/>
            <person name="Lin X."/>
            <person name="Liu X."/>
            <person name="Mattei B."/>
            <person name="McIntosh T.C."/>
            <person name="McLeod M.P."/>
            <person name="McPherson D."/>
            <person name="Merkulov G."/>
            <person name="Milshina N.V."/>
            <person name="Mobarry C."/>
            <person name="Morris J."/>
            <person name="Moshrefi A."/>
            <person name="Mount S.M."/>
            <person name="Moy M."/>
            <person name="Murphy B."/>
            <person name="Murphy L."/>
            <person name="Muzny D.M."/>
            <person name="Nelson D.L."/>
            <person name="Nelson D.R."/>
            <person name="Nelson K.A."/>
            <person name="Nixon K."/>
            <person name="Nusskern D.R."/>
            <person name="Pacleb J.M."/>
            <person name="Palazzolo M."/>
            <person name="Pittman G.S."/>
            <person name="Pan S."/>
            <person name="Pollard J."/>
            <person name="Puri V."/>
            <person name="Reese M.G."/>
            <person name="Reinert K."/>
            <person name="Remington K."/>
            <person name="Saunders R.D.C."/>
            <person name="Scheeler F."/>
            <person name="Shen H."/>
            <person name="Shue B.C."/>
            <person name="Siden-Kiamos I."/>
            <person name="Simpson M."/>
            <person name="Skupski M.P."/>
            <person name="Smith T.J."/>
            <person name="Spier E."/>
            <person name="Spradling A.C."/>
            <person name="Stapleton M."/>
            <person name="Strong R."/>
            <person name="Sun E."/>
            <person name="Svirskas R."/>
            <person name="Tector C."/>
            <person name="Turner R."/>
            <person name="Venter E."/>
            <person name="Wang A.H."/>
            <person name="Wang X."/>
            <person name="Wang Z.-Y."/>
            <person name="Wassarman D.A."/>
            <person name="Weinstock G.M."/>
            <person name="Weissenbach J."/>
            <person name="Williams S.M."/>
            <person name="Woodage T."/>
            <person name="Worley K.C."/>
            <person name="Wu D."/>
            <person name="Yang S."/>
            <person name="Yao Q.A."/>
            <person name="Ye J."/>
            <person name="Yeh R.-F."/>
            <person name="Zaveri J.S."/>
            <person name="Zhan M."/>
            <person name="Zhang G."/>
            <person name="Zhao Q."/>
            <person name="Zheng L."/>
            <person name="Zheng X.H."/>
            <person name="Zhong F.N."/>
            <person name="Zhong W."/>
            <person name="Zhou X."/>
            <person name="Zhu S.C."/>
            <person name="Zhu X."/>
            <person name="Smith H.O."/>
            <person name="Gibbs R.A."/>
            <person name="Myers E.W."/>
            <person name="Rubin G.M."/>
            <person name="Venter J.C."/>
        </authorList>
    </citation>
    <scope>NUCLEOTIDE SEQUENCE [LARGE SCALE GENOMIC DNA]</scope>
    <source>
        <strain evidence="4">Berkeley</strain>
    </source>
</reference>
<reference evidence="7 8" key="2">
    <citation type="journal article" date="2002" name="Genome Biol.">
        <title>Annotation of the Drosophila melanogaster euchromatic genome: a systematic review.</title>
        <authorList>
            <person name="Misra S."/>
            <person name="Crosby M.A."/>
            <person name="Mungall C.J."/>
            <person name="Matthews B.B."/>
            <person name="Campbell K.S."/>
            <person name="Hradecky P."/>
            <person name="Huang Y."/>
            <person name="Kaminker J.S."/>
            <person name="Millburn G.H."/>
            <person name="Prochnik S.E."/>
            <person name="Smith C.D."/>
            <person name="Tupy J.L."/>
            <person name="Whitfield E.J."/>
            <person name="Bayraktaroglu L."/>
            <person name="Berman B.P."/>
            <person name="Bettencourt B.R."/>
            <person name="Celniker S.E."/>
            <person name="de Grey A.D.N.J."/>
            <person name="Drysdale R.A."/>
            <person name="Harris N.L."/>
            <person name="Richter J."/>
            <person name="Russo S."/>
            <person name="Schroeder A.J."/>
            <person name="Shu S.Q."/>
            <person name="Stapleton M."/>
            <person name="Yamada C."/>
            <person name="Ashburner M."/>
            <person name="Gelbart W.M."/>
            <person name="Rubin G.M."/>
            <person name="Lewis S.E."/>
        </authorList>
    </citation>
    <scope>GENOME REANNOTATION</scope>
    <scope>ALTERNATIVE SPLICING</scope>
    <source>
        <strain>Berkeley</strain>
    </source>
</reference>
<reference key="3">
    <citation type="journal article" date="2000" name="Science">
        <title>From sequence to chromosome: the tip of the X chromosome of D. melanogaster.</title>
        <authorList>
            <person name="Benos P.V."/>
            <person name="Gatt M.K."/>
            <person name="Ashburner M."/>
            <person name="Murphy L."/>
            <person name="Harris D."/>
            <person name="Barrell B.G."/>
            <person name="Ferraz C."/>
            <person name="Vidal S."/>
            <person name="Brun C."/>
            <person name="Demailles J."/>
            <person name="Cadieu E."/>
            <person name="Dreano S."/>
            <person name="Gloux S."/>
            <person name="Lelaure V."/>
            <person name="Mottier S."/>
            <person name="Galibert F."/>
            <person name="Borkova D."/>
            <person name="Minana B."/>
            <person name="Kafatos F.C."/>
            <person name="Louis C."/>
            <person name="Siden-Kiamos I."/>
            <person name="Bolshakov S."/>
            <person name="Papagiannakis G."/>
            <person name="Spanos L."/>
            <person name="Cox S."/>
            <person name="Madueno E."/>
            <person name="de Pablos B."/>
            <person name="Modolell J."/>
            <person name="Peter A."/>
            <person name="Schoettler P."/>
            <person name="Werner M."/>
            <person name="Mourkioti F."/>
            <person name="Beinert N."/>
            <person name="Dowe G."/>
            <person name="Schaefer U."/>
            <person name="Jaeckle H."/>
            <person name="Bucheton A."/>
            <person name="Callister D.M."/>
            <person name="Campbell L.A."/>
            <person name="Darlamitsou A."/>
            <person name="Henderson N.S."/>
            <person name="McMillan P.J."/>
            <person name="Salles C."/>
            <person name="Tait E.A."/>
            <person name="Valenti P."/>
            <person name="Saunders R.D.C."/>
            <person name="Glover D.M."/>
        </authorList>
    </citation>
    <scope>NUCLEOTIDE SEQUENCE [LARGE SCALE GENOMIC DNA] OF 1-524</scope>
    <source>
        <strain>Oregon-R</strain>
    </source>
</reference>
<reference evidence="7" key="4">
    <citation type="journal article" date="1991" name="J. Mol. Biol.">
        <title>Characterization of the memory gene dunce of Drosophila melanogaster.</title>
        <authorList>
            <person name="Qiu Y.H."/>
            <person name="Chen C.-N."/>
            <person name="Malone T."/>
            <person name="Richter L."/>
            <person name="Beckendorf S.K."/>
            <person name="Davis R.L."/>
        </authorList>
    </citation>
    <scope>NUCLEOTIDE SEQUENCE [GENOMIC DNA / MRNA] OF 495-1209</scope>
    <scope>FUNCTION</scope>
    <scope>CATALYTIC ACTIVITY</scope>
    <scope>SUBUNIT</scope>
    <source>
        <strain evidence="5">Canton-S</strain>
    </source>
</reference>
<proteinExistence type="evidence at protein level"/>
<dbReference type="EC" id="3.1.4.53"/>
<dbReference type="EMBL" id="AE014298">
    <property type="protein sequence ID" value="AAF45858.3"/>
    <property type="molecule type" value="Genomic_DNA"/>
</dbReference>
<dbReference type="EMBL" id="AL024484">
    <property type="protein sequence ID" value="CAA19668.1"/>
    <property type="status" value="ALT_SEQ"/>
    <property type="molecule type" value="Genomic_DNA"/>
</dbReference>
<dbReference type="RefSeq" id="NP_726846.1">
    <molecule id="Q9W4T4-1"/>
    <property type="nucleotide sequence ID" value="NM_166959.2"/>
</dbReference>
<dbReference type="RefSeq" id="NP_726847.2">
    <molecule id="Q9W4T4-1"/>
    <property type="nucleotide sequence ID" value="NM_166960.3"/>
</dbReference>
<dbReference type="SMR" id="Q9W4T4"/>
<dbReference type="BioGRID" id="57834">
    <property type="interactions" value="19"/>
</dbReference>
<dbReference type="FunCoup" id="Q9W4T4">
    <property type="interactions" value="359"/>
</dbReference>
<dbReference type="IntAct" id="Q9W4T4">
    <property type="interactions" value="2"/>
</dbReference>
<dbReference type="STRING" id="7227.FBpp0305507"/>
<dbReference type="GlyGen" id="Q9W4T4">
    <property type="glycosylation" value="2 sites, 1 O-linked glycan (1 site)"/>
</dbReference>
<dbReference type="PaxDb" id="7227-FBpp0305507"/>
<dbReference type="DNASU" id="31309"/>
<dbReference type="EnsemblMetazoa" id="FBtr0070509">
    <molecule id="Q9W4T4-1"/>
    <property type="protein sequence ID" value="FBpp0070485"/>
    <property type="gene ID" value="FBgn0000479"/>
</dbReference>
<dbReference type="EnsemblMetazoa" id="FBtr0333315">
    <molecule id="Q9W4T4-1"/>
    <property type="protein sequence ID" value="FBpp0305507"/>
    <property type="gene ID" value="FBgn0000479"/>
</dbReference>
<dbReference type="GeneID" id="31309"/>
<dbReference type="UCSC" id="CG32498-RA">
    <molecule id="Q9W4T4-1"/>
    <property type="organism name" value="d. melanogaster"/>
</dbReference>
<dbReference type="AGR" id="FB:FBgn0000479"/>
<dbReference type="CTD" id="31309"/>
<dbReference type="FlyBase" id="FBgn0000479">
    <property type="gene designation" value="dnc"/>
</dbReference>
<dbReference type="VEuPathDB" id="VectorBase:FBgn0000479"/>
<dbReference type="eggNOG" id="KOG3689">
    <property type="taxonomic scope" value="Eukaryota"/>
</dbReference>
<dbReference type="GeneTree" id="ENSGT00940000155190"/>
<dbReference type="HOGENOM" id="CLU_007660_0_0_1"/>
<dbReference type="InParanoid" id="Q9W4T4"/>
<dbReference type="OrthoDB" id="189220at2759"/>
<dbReference type="PhylomeDB" id="Q9W4T4"/>
<dbReference type="Reactome" id="R-DME-180024">
    <property type="pathway name" value="DARPP-32 events"/>
</dbReference>
<dbReference type="Reactome" id="R-DME-418555">
    <property type="pathway name" value="G alpha (s) signalling events"/>
</dbReference>
<dbReference type="UniPathway" id="UPA00762">
    <property type="reaction ID" value="UER00747"/>
</dbReference>
<dbReference type="BioGRID-ORCS" id="31309">
    <property type="hits" value="1 hit in 3 CRISPR screens"/>
</dbReference>
<dbReference type="ChiTaRS" id="dnc">
    <property type="organism name" value="fly"/>
</dbReference>
<dbReference type="GenomeRNAi" id="31309"/>
<dbReference type="Proteomes" id="UP000000803">
    <property type="component" value="Chromosome X"/>
</dbReference>
<dbReference type="Bgee" id="FBgn0000479">
    <property type="expression patterns" value="Expressed in muscle cell in antenna and 285 other cell types or tissues"/>
</dbReference>
<dbReference type="ExpressionAtlas" id="Q9W4T4">
    <property type="expression patterns" value="baseline and differential"/>
</dbReference>
<dbReference type="GO" id="GO:0005829">
    <property type="term" value="C:cytosol"/>
    <property type="evidence" value="ECO:0000314"/>
    <property type="project" value="FlyBase"/>
</dbReference>
<dbReference type="GO" id="GO:0005634">
    <property type="term" value="C:nucleus"/>
    <property type="evidence" value="ECO:0000314"/>
    <property type="project" value="FlyBase"/>
</dbReference>
<dbReference type="GO" id="GO:0045202">
    <property type="term" value="C:synapse"/>
    <property type="evidence" value="ECO:0007669"/>
    <property type="project" value="GOC"/>
</dbReference>
<dbReference type="GO" id="GO:0004115">
    <property type="term" value="F:3',5'-cyclic-AMP phosphodiesterase activity"/>
    <property type="evidence" value="ECO:0000250"/>
    <property type="project" value="FlyBase"/>
</dbReference>
<dbReference type="GO" id="GO:0047555">
    <property type="term" value="F:3',5'-cyclic-GMP phosphodiesterase activity"/>
    <property type="evidence" value="ECO:0000318"/>
    <property type="project" value="GO_Central"/>
</dbReference>
<dbReference type="GO" id="GO:0046872">
    <property type="term" value="F:metal ion binding"/>
    <property type="evidence" value="ECO:0007669"/>
    <property type="project" value="UniProtKB-KW"/>
</dbReference>
<dbReference type="GO" id="GO:0007615">
    <property type="term" value="P:anesthesia-resistant memory"/>
    <property type="evidence" value="ECO:0000315"/>
    <property type="project" value="FlyBase"/>
</dbReference>
<dbReference type="GO" id="GO:0008306">
    <property type="term" value="P:associative learning"/>
    <property type="evidence" value="ECO:0000315"/>
    <property type="project" value="FlyBase"/>
</dbReference>
<dbReference type="GO" id="GO:0048675">
    <property type="term" value="P:axon extension"/>
    <property type="evidence" value="ECO:0000315"/>
    <property type="project" value="FlyBase"/>
</dbReference>
<dbReference type="GO" id="GO:0048149">
    <property type="term" value="P:behavioral response to ethanol"/>
    <property type="evidence" value="ECO:0000315"/>
    <property type="project" value="FlyBase"/>
</dbReference>
<dbReference type="GO" id="GO:0006198">
    <property type="term" value="P:cAMP catabolic process"/>
    <property type="evidence" value="ECO:0007669"/>
    <property type="project" value="UniProtKB-UniPathway"/>
</dbReference>
<dbReference type="GO" id="GO:0019933">
    <property type="term" value="P:cAMP-mediated signaling"/>
    <property type="evidence" value="ECO:0000318"/>
    <property type="project" value="GO_Central"/>
</dbReference>
<dbReference type="GO" id="GO:0007268">
    <property type="term" value="P:chemical synaptic transmission"/>
    <property type="evidence" value="ECO:0000315"/>
    <property type="project" value="FlyBase"/>
</dbReference>
<dbReference type="GO" id="GO:0007623">
    <property type="term" value="P:circadian rhythm"/>
    <property type="evidence" value="ECO:0000304"/>
    <property type="project" value="FlyBase"/>
</dbReference>
<dbReference type="GO" id="GO:0001661">
    <property type="term" value="P:conditioned taste aversion"/>
    <property type="evidence" value="ECO:0000315"/>
    <property type="project" value="FlyBase"/>
</dbReference>
<dbReference type="GO" id="GO:0007619">
    <property type="term" value="P:courtship behavior"/>
    <property type="evidence" value="ECO:0000304"/>
    <property type="project" value="FlyBase"/>
</dbReference>
<dbReference type="GO" id="GO:0007612">
    <property type="term" value="P:learning"/>
    <property type="evidence" value="ECO:0000315"/>
    <property type="project" value="FlyBase"/>
</dbReference>
<dbReference type="GO" id="GO:0007617">
    <property type="term" value="P:mating behavior"/>
    <property type="evidence" value="ECO:0000304"/>
    <property type="project" value="FlyBase"/>
</dbReference>
<dbReference type="GO" id="GO:0072375">
    <property type="term" value="P:medium-term memory"/>
    <property type="evidence" value="ECO:0000315"/>
    <property type="project" value="FlyBase"/>
</dbReference>
<dbReference type="GO" id="GO:0007613">
    <property type="term" value="P:memory"/>
    <property type="evidence" value="ECO:0000315"/>
    <property type="project" value="FlyBase"/>
</dbReference>
<dbReference type="GO" id="GO:0106072">
    <property type="term" value="P:negative regulation of adenylate cyclase-activating G protein-coupled receptor signaling pathway"/>
    <property type="evidence" value="ECO:0000315"/>
    <property type="project" value="FlyBase"/>
</dbReference>
<dbReference type="GO" id="GO:0046958">
    <property type="term" value="P:nonassociative learning"/>
    <property type="evidence" value="ECO:0000304"/>
    <property type="project" value="FlyBase"/>
</dbReference>
<dbReference type="GO" id="GO:0008355">
    <property type="term" value="P:olfactory learning"/>
    <property type="evidence" value="ECO:0000304"/>
    <property type="project" value="FlyBase"/>
</dbReference>
<dbReference type="GO" id="GO:0007614">
    <property type="term" value="P:short-term memory"/>
    <property type="evidence" value="ECO:0000315"/>
    <property type="project" value="FlyBase"/>
</dbReference>
<dbReference type="GO" id="GO:0040040">
    <property type="term" value="P:thermosensory behavior"/>
    <property type="evidence" value="ECO:0000315"/>
    <property type="project" value="FlyBase"/>
</dbReference>
<dbReference type="CDD" id="cd00077">
    <property type="entry name" value="HDc"/>
    <property type="match status" value="1"/>
</dbReference>
<dbReference type="FunFam" id="1.10.1300.10:FF:000001">
    <property type="entry name" value="Phosphodiesterase"/>
    <property type="match status" value="1"/>
</dbReference>
<dbReference type="Gene3D" id="1.10.1300.10">
    <property type="entry name" value="3'5'-cyclic nucleotide phosphodiesterase, catalytic domain"/>
    <property type="match status" value="1"/>
</dbReference>
<dbReference type="InterPro" id="IPR003607">
    <property type="entry name" value="HD/PDEase_dom"/>
</dbReference>
<dbReference type="InterPro" id="IPR040844">
    <property type="entry name" value="PDE4_UCR"/>
</dbReference>
<dbReference type="InterPro" id="IPR023088">
    <property type="entry name" value="PDEase"/>
</dbReference>
<dbReference type="InterPro" id="IPR002073">
    <property type="entry name" value="PDEase_catalytic_dom"/>
</dbReference>
<dbReference type="InterPro" id="IPR036971">
    <property type="entry name" value="PDEase_catalytic_dom_sf"/>
</dbReference>
<dbReference type="InterPro" id="IPR023174">
    <property type="entry name" value="PDEase_CS"/>
</dbReference>
<dbReference type="PANTHER" id="PTHR11347">
    <property type="entry name" value="CYCLIC NUCLEOTIDE PHOSPHODIESTERASE"/>
    <property type="match status" value="1"/>
</dbReference>
<dbReference type="Pfam" id="PF18100">
    <property type="entry name" value="PDE4_UCR"/>
    <property type="match status" value="1"/>
</dbReference>
<dbReference type="Pfam" id="PF00233">
    <property type="entry name" value="PDEase_I"/>
    <property type="match status" value="1"/>
</dbReference>
<dbReference type="PRINTS" id="PR00387">
    <property type="entry name" value="PDIESTERASE1"/>
</dbReference>
<dbReference type="SUPFAM" id="SSF109604">
    <property type="entry name" value="HD-domain/PDEase-like"/>
    <property type="match status" value="1"/>
</dbReference>
<dbReference type="PROSITE" id="PS00126">
    <property type="entry name" value="PDEASE_I_1"/>
    <property type="match status" value="1"/>
</dbReference>
<dbReference type="PROSITE" id="PS51845">
    <property type="entry name" value="PDEASE_I_2"/>
    <property type="match status" value="1"/>
</dbReference>
<organism>
    <name type="scientific">Drosophila melanogaster</name>
    <name type="common">Fruit fly</name>
    <dbReference type="NCBI Taxonomy" id="7227"/>
    <lineage>
        <taxon>Eukaryota</taxon>
        <taxon>Metazoa</taxon>
        <taxon>Ecdysozoa</taxon>
        <taxon>Arthropoda</taxon>
        <taxon>Hexapoda</taxon>
        <taxon>Insecta</taxon>
        <taxon>Pterygota</taxon>
        <taxon>Neoptera</taxon>
        <taxon>Endopterygota</taxon>
        <taxon>Diptera</taxon>
        <taxon>Brachycera</taxon>
        <taxon>Muscomorpha</taxon>
        <taxon>Ephydroidea</taxon>
        <taxon>Drosophilidae</taxon>
        <taxon>Drosophila</taxon>
        <taxon>Sophophora</taxon>
    </lineage>
</organism>
<protein>
    <recommendedName>
        <fullName evidence="7">3',5'-cyclic-AMP phosphodiesterase, isoform I</fullName>
        <ecNumber>3.1.4.53</ecNumber>
    </recommendedName>
    <alternativeName>
        <fullName>Learning/memory process protein</fullName>
    </alternativeName>
    <alternativeName>
        <fullName>Protein dunce</fullName>
    </alternativeName>
    <alternativeName>
        <fullName evidence="7">cAMP-specific phosphodiesterase, isoform I</fullName>
    </alternativeName>
</protein>
<accession>Q9W4T4</accession>
<name>PDE4A_DROME</name>
<keyword id="KW-0024">Alternative initiation</keyword>
<keyword id="KW-0025">Alternative splicing</keyword>
<keyword id="KW-0114">cAMP</keyword>
<keyword id="KW-0378">Hydrolase</keyword>
<keyword id="KW-0479">Metal-binding</keyword>
<keyword id="KW-1185">Reference proteome</keyword>
<evidence type="ECO:0000250" key="1"/>
<evidence type="ECO:0000255" key="2">
    <source>
        <dbReference type="PROSITE-ProRule" id="PRU01192"/>
    </source>
</evidence>
<evidence type="ECO:0000256" key="3">
    <source>
        <dbReference type="SAM" id="MobiDB-lite"/>
    </source>
</evidence>
<evidence type="ECO:0000269" key="4">
    <source>
    </source>
</evidence>
<evidence type="ECO:0000269" key="5">
    <source>
    </source>
</evidence>
<evidence type="ECO:0000303" key="6">
    <source>
    </source>
</evidence>
<evidence type="ECO:0000305" key="7"/>
<evidence type="ECO:0000312" key="8">
    <source>
        <dbReference type="EMBL" id="AAF45858.3"/>
    </source>
</evidence>